<comment type="function">
    <text evidence="1">Catalyzes the reversible phosphorylation of UMP to UDP.</text>
</comment>
<comment type="catalytic activity">
    <reaction evidence="1">
        <text>UMP + ATP = UDP + ADP</text>
        <dbReference type="Rhea" id="RHEA:24400"/>
        <dbReference type="ChEBI" id="CHEBI:30616"/>
        <dbReference type="ChEBI" id="CHEBI:57865"/>
        <dbReference type="ChEBI" id="CHEBI:58223"/>
        <dbReference type="ChEBI" id="CHEBI:456216"/>
        <dbReference type="EC" id="2.7.4.22"/>
    </reaction>
</comment>
<comment type="activity regulation">
    <text evidence="1">Inhibited by UTP.</text>
</comment>
<comment type="pathway">
    <text evidence="1">Pyrimidine metabolism; CTP biosynthesis via de novo pathway; UDP from UMP (UMPK route): step 1/1.</text>
</comment>
<comment type="subunit">
    <text evidence="1">Homohexamer.</text>
</comment>
<comment type="subcellular location">
    <subcellularLocation>
        <location evidence="1">Cytoplasm</location>
    </subcellularLocation>
</comment>
<comment type="similarity">
    <text evidence="1">Belongs to the UMP kinase family.</text>
</comment>
<sequence>MAEPIYRRVLVKLSGEYFAGPQDYGIDQATIDRVAGELIAARSLGIEIAVVIGGGNIFRGVEVSARGVSRTTGDTMGMLATVMNCLALAEALQRHGQKARTLAALMMPEVCELYTRAAAEQTLREGGIALLAAGTGNPYFTTDTAAVLRAAEIGAGAVLKATNVDGVYSADPKLDPNAKRFEKLTHSEALAGGYKVMDATAFALARETSLPIIVFSIAEPGSIGAVLSGAGRATVVAG</sequence>
<feature type="chain" id="PRO_0000323938" description="Uridylate kinase">
    <location>
        <begin position="1"/>
        <end position="238"/>
    </location>
</feature>
<feature type="binding site" evidence="1">
    <location>
        <begin position="12"/>
        <end position="15"/>
    </location>
    <ligand>
        <name>ATP</name>
        <dbReference type="ChEBI" id="CHEBI:30616"/>
    </ligand>
</feature>
<feature type="binding site" evidence="1">
    <location>
        <position position="54"/>
    </location>
    <ligand>
        <name>UMP</name>
        <dbReference type="ChEBI" id="CHEBI:57865"/>
    </ligand>
</feature>
<feature type="binding site" evidence="1">
    <location>
        <position position="55"/>
    </location>
    <ligand>
        <name>ATP</name>
        <dbReference type="ChEBI" id="CHEBI:30616"/>
    </ligand>
</feature>
<feature type="binding site" evidence="1">
    <location>
        <position position="59"/>
    </location>
    <ligand>
        <name>ATP</name>
        <dbReference type="ChEBI" id="CHEBI:30616"/>
    </ligand>
</feature>
<feature type="binding site" evidence="1">
    <location>
        <position position="74"/>
    </location>
    <ligand>
        <name>UMP</name>
        <dbReference type="ChEBI" id="CHEBI:57865"/>
    </ligand>
</feature>
<feature type="binding site" evidence="1">
    <location>
        <begin position="135"/>
        <end position="142"/>
    </location>
    <ligand>
        <name>UMP</name>
        <dbReference type="ChEBI" id="CHEBI:57865"/>
    </ligand>
</feature>
<feature type="binding site" evidence="1">
    <location>
        <position position="162"/>
    </location>
    <ligand>
        <name>ATP</name>
        <dbReference type="ChEBI" id="CHEBI:30616"/>
    </ligand>
</feature>
<feature type="binding site" evidence="1">
    <location>
        <position position="163"/>
    </location>
    <ligand>
        <name>ATP</name>
        <dbReference type="ChEBI" id="CHEBI:30616"/>
    </ligand>
</feature>
<feature type="binding site" evidence="1">
    <location>
        <position position="168"/>
    </location>
    <ligand>
        <name>ATP</name>
        <dbReference type="ChEBI" id="CHEBI:30616"/>
    </ligand>
</feature>
<feature type="binding site" evidence="1">
    <location>
        <position position="171"/>
    </location>
    <ligand>
        <name>ATP</name>
        <dbReference type="ChEBI" id="CHEBI:30616"/>
    </ligand>
</feature>
<proteinExistence type="inferred from homology"/>
<accession>Q6N5Q3</accession>
<gene>
    <name evidence="1" type="primary">pyrH</name>
    <name type="ordered locus">RPA2920</name>
</gene>
<dbReference type="EC" id="2.7.4.22" evidence="1"/>
<dbReference type="EMBL" id="BX572602">
    <property type="protein sequence ID" value="CAE28361.1"/>
    <property type="molecule type" value="Genomic_DNA"/>
</dbReference>
<dbReference type="RefSeq" id="WP_011158469.1">
    <property type="nucleotide sequence ID" value="NZ_CP116810.1"/>
</dbReference>
<dbReference type="SMR" id="Q6N5Q3"/>
<dbReference type="STRING" id="258594.RPA2920"/>
<dbReference type="GeneID" id="66894002"/>
<dbReference type="eggNOG" id="COG0528">
    <property type="taxonomic scope" value="Bacteria"/>
</dbReference>
<dbReference type="HOGENOM" id="CLU_033861_0_0_5"/>
<dbReference type="PhylomeDB" id="Q6N5Q3"/>
<dbReference type="UniPathway" id="UPA00159">
    <property type="reaction ID" value="UER00275"/>
</dbReference>
<dbReference type="GO" id="GO:0005829">
    <property type="term" value="C:cytosol"/>
    <property type="evidence" value="ECO:0007669"/>
    <property type="project" value="TreeGrafter"/>
</dbReference>
<dbReference type="GO" id="GO:0005524">
    <property type="term" value="F:ATP binding"/>
    <property type="evidence" value="ECO:0007669"/>
    <property type="project" value="UniProtKB-KW"/>
</dbReference>
<dbReference type="GO" id="GO:0033862">
    <property type="term" value="F:UMP kinase activity"/>
    <property type="evidence" value="ECO:0007669"/>
    <property type="project" value="UniProtKB-EC"/>
</dbReference>
<dbReference type="GO" id="GO:0044210">
    <property type="term" value="P:'de novo' CTP biosynthetic process"/>
    <property type="evidence" value="ECO:0007669"/>
    <property type="project" value="UniProtKB-UniRule"/>
</dbReference>
<dbReference type="GO" id="GO:0006225">
    <property type="term" value="P:UDP biosynthetic process"/>
    <property type="evidence" value="ECO:0007669"/>
    <property type="project" value="TreeGrafter"/>
</dbReference>
<dbReference type="CDD" id="cd04254">
    <property type="entry name" value="AAK_UMPK-PyrH-Ec"/>
    <property type="match status" value="1"/>
</dbReference>
<dbReference type="FunFam" id="3.40.1160.10:FF:000001">
    <property type="entry name" value="Uridylate kinase"/>
    <property type="match status" value="1"/>
</dbReference>
<dbReference type="Gene3D" id="3.40.1160.10">
    <property type="entry name" value="Acetylglutamate kinase-like"/>
    <property type="match status" value="1"/>
</dbReference>
<dbReference type="HAMAP" id="MF_01220_B">
    <property type="entry name" value="PyrH_B"/>
    <property type="match status" value="1"/>
</dbReference>
<dbReference type="InterPro" id="IPR036393">
    <property type="entry name" value="AceGlu_kinase-like_sf"/>
</dbReference>
<dbReference type="InterPro" id="IPR001048">
    <property type="entry name" value="Asp/Glu/Uridylate_kinase"/>
</dbReference>
<dbReference type="InterPro" id="IPR011817">
    <property type="entry name" value="Uridylate_kinase"/>
</dbReference>
<dbReference type="InterPro" id="IPR015963">
    <property type="entry name" value="Uridylate_kinase_bac"/>
</dbReference>
<dbReference type="NCBIfam" id="TIGR02075">
    <property type="entry name" value="pyrH_bact"/>
    <property type="match status" value="1"/>
</dbReference>
<dbReference type="PANTHER" id="PTHR42833">
    <property type="entry name" value="URIDYLATE KINASE"/>
    <property type="match status" value="1"/>
</dbReference>
<dbReference type="PANTHER" id="PTHR42833:SF4">
    <property type="entry name" value="URIDYLATE KINASE PUMPKIN, CHLOROPLASTIC"/>
    <property type="match status" value="1"/>
</dbReference>
<dbReference type="Pfam" id="PF00696">
    <property type="entry name" value="AA_kinase"/>
    <property type="match status" value="1"/>
</dbReference>
<dbReference type="PIRSF" id="PIRSF005650">
    <property type="entry name" value="Uridylate_kin"/>
    <property type="match status" value="1"/>
</dbReference>
<dbReference type="SUPFAM" id="SSF53633">
    <property type="entry name" value="Carbamate kinase-like"/>
    <property type="match status" value="1"/>
</dbReference>
<protein>
    <recommendedName>
        <fullName evidence="1">Uridylate kinase</fullName>
        <shortName evidence="1">UK</shortName>
        <ecNumber evidence="1">2.7.4.22</ecNumber>
    </recommendedName>
    <alternativeName>
        <fullName evidence="1">Uridine monophosphate kinase</fullName>
        <shortName evidence="1">UMP kinase</shortName>
        <shortName evidence="1">UMPK</shortName>
    </alternativeName>
</protein>
<organism>
    <name type="scientific">Rhodopseudomonas palustris (strain ATCC BAA-98 / CGA009)</name>
    <dbReference type="NCBI Taxonomy" id="258594"/>
    <lineage>
        <taxon>Bacteria</taxon>
        <taxon>Pseudomonadati</taxon>
        <taxon>Pseudomonadota</taxon>
        <taxon>Alphaproteobacteria</taxon>
        <taxon>Hyphomicrobiales</taxon>
        <taxon>Nitrobacteraceae</taxon>
        <taxon>Rhodopseudomonas</taxon>
    </lineage>
</organism>
<name>PYRH_RHOPA</name>
<evidence type="ECO:0000255" key="1">
    <source>
        <dbReference type="HAMAP-Rule" id="MF_01220"/>
    </source>
</evidence>
<reference key="1">
    <citation type="journal article" date="2004" name="Nat. Biotechnol.">
        <title>Complete genome sequence of the metabolically versatile photosynthetic bacterium Rhodopseudomonas palustris.</title>
        <authorList>
            <person name="Larimer F.W."/>
            <person name="Chain P."/>
            <person name="Hauser L."/>
            <person name="Lamerdin J.E."/>
            <person name="Malfatti S."/>
            <person name="Do L."/>
            <person name="Land M.L."/>
            <person name="Pelletier D.A."/>
            <person name="Beatty J.T."/>
            <person name="Lang A.S."/>
            <person name="Tabita F.R."/>
            <person name="Gibson J.L."/>
            <person name="Hanson T.E."/>
            <person name="Bobst C."/>
            <person name="Torres y Torres J.L."/>
            <person name="Peres C."/>
            <person name="Harrison F.H."/>
            <person name="Gibson J."/>
            <person name="Harwood C.S."/>
        </authorList>
    </citation>
    <scope>NUCLEOTIDE SEQUENCE [LARGE SCALE GENOMIC DNA]</scope>
    <source>
        <strain>ATCC BAA-98 / CGA009</strain>
    </source>
</reference>
<keyword id="KW-0067">ATP-binding</keyword>
<keyword id="KW-0963">Cytoplasm</keyword>
<keyword id="KW-0418">Kinase</keyword>
<keyword id="KW-0547">Nucleotide-binding</keyword>
<keyword id="KW-0665">Pyrimidine biosynthesis</keyword>
<keyword id="KW-0808">Transferase</keyword>